<evidence type="ECO:0000255" key="1">
    <source>
        <dbReference type="HAMAP-Rule" id="MF_00167"/>
    </source>
</evidence>
<dbReference type="EMBL" id="AE015451">
    <property type="protein sequence ID" value="AAN69426.1"/>
    <property type="molecule type" value="Genomic_DNA"/>
</dbReference>
<dbReference type="RefSeq" id="NP_745962.1">
    <property type="nucleotide sequence ID" value="NC_002947.4"/>
</dbReference>
<dbReference type="RefSeq" id="WP_010954659.1">
    <property type="nucleotide sequence ID" value="NZ_CP169744.1"/>
</dbReference>
<dbReference type="SMR" id="Q88G93"/>
<dbReference type="STRING" id="160488.PP_3832"/>
<dbReference type="PaxDb" id="160488-PP_3832"/>
<dbReference type="GeneID" id="83679491"/>
<dbReference type="KEGG" id="ppu:PP_3832"/>
<dbReference type="PATRIC" id="fig|160488.4.peg.4088"/>
<dbReference type="eggNOG" id="COG1551">
    <property type="taxonomic scope" value="Bacteria"/>
</dbReference>
<dbReference type="HOGENOM" id="CLU_164837_2_1_6"/>
<dbReference type="OrthoDB" id="9809061at2"/>
<dbReference type="PhylomeDB" id="Q88G93"/>
<dbReference type="BioCyc" id="PPUT160488:G1G01-4090-MONOMER"/>
<dbReference type="Proteomes" id="UP000000556">
    <property type="component" value="Chromosome"/>
</dbReference>
<dbReference type="GO" id="GO:0005829">
    <property type="term" value="C:cytosol"/>
    <property type="evidence" value="ECO:0007669"/>
    <property type="project" value="TreeGrafter"/>
</dbReference>
<dbReference type="GO" id="GO:0048027">
    <property type="term" value="F:mRNA 5'-UTR binding"/>
    <property type="evidence" value="ECO:0007669"/>
    <property type="project" value="UniProtKB-UniRule"/>
</dbReference>
<dbReference type="GO" id="GO:0006402">
    <property type="term" value="P:mRNA catabolic process"/>
    <property type="evidence" value="ECO:0007669"/>
    <property type="project" value="InterPro"/>
</dbReference>
<dbReference type="GO" id="GO:0045947">
    <property type="term" value="P:negative regulation of translational initiation"/>
    <property type="evidence" value="ECO:0007669"/>
    <property type="project" value="UniProtKB-UniRule"/>
</dbReference>
<dbReference type="GO" id="GO:0045948">
    <property type="term" value="P:positive regulation of translational initiation"/>
    <property type="evidence" value="ECO:0007669"/>
    <property type="project" value="UniProtKB-UniRule"/>
</dbReference>
<dbReference type="GO" id="GO:0006109">
    <property type="term" value="P:regulation of carbohydrate metabolic process"/>
    <property type="evidence" value="ECO:0007669"/>
    <property type="project" value="UniProtKB-UniRule"/>
</dbReference>
<dbReference type="FunFam" id="2.60.40.4380:FF:000002">
    <property type="entry name" value="Translational regulator CsrA"/>
    <property type="match status" value="1"/>
</dbReference>
<dbReference type="Gene3D" id="2.60.40.4380">
    <property type="entry name" value="Translational regulator CsrA"/>
    <property type="match status" value="1"/>
</dbReference>
<dbReference type="HAMAP" id="MF_00167">
    <property type="entry name" value="CsrA"/>
    <property type="match status" value="1"/>
</dbReference>
<dbReference type="InterPro" id="IPR003751">
    <property type="entry name" value="CsrA"/>
</dbReference>
<dbReference type="InterPro" id="IPR036107">
    <property type="entry name" value="CsrA_sf"/>
</dbReference>
<dbReference type="NCBIfam" id="TIGR00202">
    <property type="entry name" value="csrA"/>
    <property type="match status" value="1"/>
</dbReference>
<dbReference type="NCBIfam" id="NF002469">
    <property type="entry name" value="PRK01712.1"/>
    <property type="match status" value="1"/>
</dbReference>
<dbReference type="PANTHER" id="PTHR34984">
    <property type="entry name" value="CARBON STORAGE REGULATOR"/>
    <property type="match status" value="1"/>
</dbReference>
<dbReference type="PANTHER" id="PTHR34984:SF1">
    <property type="entry name" value="CARBON STORAGE REGULATOR"/>
    <property type="match status" value="1"/>
</dbReference>
<dbReference type="Pfam" id="PF02599">
    <property type="entry name" value="CsrA"/>
    <property type="match status" value="1"/>
</dbReference>
<dbReference type="SUPFAM" id="SSF117130">
    <property type="entry name" value="CsrA-like"/>
    <property type="match status" value="1"/>
</dbReference>
<reference key="1">
    <citation type="journal article" date="2002" name="Environ. Microbiol.">
        <title>Complete genome sequence and comparative analysis of the metabolically versatile Pseudomonas putida KT2440.</title>
        <authorList>
            <person name="Nelson K.E."/>
            <person name="Weinel C."/>
            <person name="Paulsen I.T."/>
            <person name="Dodson R.J."/>
            <person name="Hilbert H."/>
            <person name="Martins dos Santos V.A.P."/>
            <person name="Fouts D.E."/>
            <person name="Gill S.R."/>
            <person name="Pop M."/>
            <person name="Holmes M."/>
            <person name="Brinkac L.M."/>
            <person name="Beanan M.J."/>
            <person name="DeBoy R.T."/>
            <person name="Daugherty S.C."/>
            <person name="Kolonay J.F."/>
            <person name="Madupu R."/>
            <person name="Nelson W.C."/>
            <person name="White O."/>
            <person name="Peterson J.D."/>
            <person name="Khouri H.M."/>
            <person name="Hance I."/>
            <person name="Chris Lee P."/>
            <person name="Holtzapple E.K."/>
            <person name="Scanlan D."/>
            <person name="Tran K."/>
            <person name="Moazzez A."/>
            <person name="Utterback T.R."/>
            <person name="Rizzo M."/>
            <person name="Lee K."/>
            <person name="Kosack D."/>
            <person name="Moestl D."/>
            <person name="Wedler H."/>
            <person name="Lauber J."/>
            <person name="Stjepandic D."/>
            <person name="Hoheisel J."/>
            <person name="Straetz M."/>
            <person name="Heim S."/>
            <person name="Kiewitz C."/>
            <person name="Eisen J.A."/>
            <person name="Timmis K.N."/>
            <person name="Duesterhoeft A."/>
            <person name="Tuemmler B."/>
            <person name="Fraser C.M."/>
        </authorList>
    </citation>
    <scope>NUCLEOTIDE SEQUENCE [LARGE SCALE GENOMIC DNA]</scope>
    <source>
        <strain>ATCC 47054 / DSM 6125 / CFBP 8728 / NCIMB 11950 / KT2440</strain>
    </source>
</reference>
<sequence>MLILTRKVGESIVINDDIKVTILGVKGMQVRIGIDAPKDVQVHREEIFKRIQAGSPAPEKHEDTH</sequence>
<keyword id="KW-0010">Activator</keyword>
<keyword id="KW-0963">Cytoplasm</keyword>
<keyword id="KW-1185">Reference proteome</keyword>
<keyword id="KW-0678">Repressor</keyword>
<keyword id="KW-0694">RNA-binding</keyword>
<keyword id="KW-0810">Translation regulation</keyword>
<organism>
    <name type="scientific">Pseudomonas putida (strain ATCC 47054 / DSM 6125 / CFBP 8728 / NCIMB 11950 / KT2440)</name>
    <dbReference type="NCBI Taxonomy" id="160488"/>
    <lineage>
        <taxon>Bacteria</taxon>
        <taxon>Pseudomonadati</taxon>
        <taxon>Pseudomonadota</taxon>
        <taxon>Gammaproteobacteria</taxon>
        <taxon>Pseudomonadales</taxon>
        <taxon>Pseudomonadaceae</taxon>
        <taxon>Pseudomonas</taxon>
    </lineage>
</organism>
<feature type="chain" id="PRO_0000177082" description="Translational regulator CsrA">
    <location>
        <begin position="1"/>
        <end position="65"/>
    </location>
</feature>
<comment type="function">
    <text evidence="1">A key translational regulator that binds mRNA to regulate translation initiation and/or mRNA stability. Mediates global changes in gene expression, shifting from rapid growth to stress survival by linking envelope stress, the stringent response and the catabolite repression systems. Usually binds in the 5'-UTR; binding at or near the Shine-Dalgarno sequence prevents ribosome-binding, repressing translation, binding elsewhere in the 5'-UTR can activate translation and/or stabilize the mRNA. Its function is antagonized by small RNA(s).</text>
</comment>
<comment type="subunit">
    <text evidence="1">Homodimer; the beta-strands of each monomer intercalate to form a hydrophobic core, while the alpha-helices form wings that extend away from the core.</text>
</comment>
<comment type="subcellular location">
    <subcellularLocation>
        <location evidence="1">Cytoplasm</location>
    </subcellularLocation>
</comment>
<comment type="similarity">
    <text evidence="1">Belongs to the CsrA/RsmA family.</text>
</comment>
<name>CSRA_PSEPK</name>
<protein>
    <recommendedName>
        <fullName evidence="1">Translational regulator CsrA</fullName>
    </recommendedName>
    <alternativeName>
        <fullName evidence="1">Carbon storage regulator</fullName>
    </alternativeName>
</protein>
<proteinExistence type="inferred from homology"/>
<gene>
    <name evidence="1" type="primary">csrA</name>
    <name type="ordered locus">PP_3832</name>
</gene>
<accession>Q88G93</accession>